<feature type="chain" id="PRO_0000146048" description="Phosphoglycerate kinase">
    <location>
        <begin position="1"/>
        <end position="397"/>
    </location>
</feature>
<feature type="binding site" evidence="1">
    <location>
        <begin position="22"/>
        <end position="24"/>
    </location>
    <ligand>
        <name>substrate</name>
    </ligand>
</feature>
<feature type="binding site" evidence="1">
    <location>
        <position position="37"/>
    </location>
    <ligand>
        <name>substrate</name>
    </ligand>
</feature>
<feature type="binding site" evidence="1">
    <location>
        <begin position="60"/>
        <end position="63"/>
    </location>
    <ligand>
        <name>substrate</name>
    </ligand>
</feature>
<feature type="binding site" evidence="1">
    <location>
        <position position="119"/>
    </location>
    <ligand>
        <name>substrate</name>
    </ligand>
</feature>
<feature type="binding site" evidence="1">
    <location>
        <position position="152"/>
    </location>
    <ligand>
        <name>substrate</name>
    </ligand>
</feature>
<feature type="binding site" evidence="1">
    <location>
        <position position="202"/>
    </location>
    <ligand>
        <name>ATP</name>
        <dbReference type="ChEBI" id="CHEBI:30616"/>
    </ligand>
</feature>
<feature type="binding site" evidence="1">
    <location>
        <position position="324"/>
    </location>
    <ligand>
        <name>ATP</name>
        <dbReference type="ChEBI" id="CHEBI:30616"/>
    </ligand>
</feature>
<feature type="binding site" evidence="1">
    <location>
        <begin position="354"/>
        <end position="357"/>
    </location>
    <ligand>
        <name>ATP</name>
        <dbReference type="ChEBI" id="CHEBI:30616"/>
    </ligand>
</feature>
<dbReference type="EC" id="2.7.2.3"/>
<dbReference type="EMBL" id="M19376">
    <property type="protein sequence ID" value="AAA27699.1"/>
    <property type="molecule type" value="Genomic_DNA"/>
</dbReference>
<dbReference type="EMBL" id="AE008692">
    <property type="protein sequence ID" value="AAV88802.1"/>
    <property type="molecule type" value="Genomic_DNA"/>
</dbReference>
<dbReference type="EMBL" id="M18802">
    <property type="protein sequence ID" value="AAA27689.1"/>
    <property type="molecule type" value="Genomic_DNA"/>
</dbReference>
<dbReference type="PIR" id="A27745">
    <property type="entry name" value="KIZYG"/>
</dbReference>
<dbReference type="RefSeq" id="WP_011240133.1">
    <property type="nucleotide sequence ID" value="NZ_CP035711.1"/>
</dbReference>
<dbReference type="SMR" id="P09404"/>
<dbReference type="STRING" id="264203.ZMO0178"/>
<dbReference type="KEGG" id="zmo:ZMO0178"/>
<dbReference type="eggNOG" id="COG0126">
    <property type="taxonomic scope" value="Bacteria"/>
</dbReference>
<dbReference type="HOGENOM" id="CLU_025427_0_2_5"/>
<dbReference type="SABIO-RK" id="P09404"/>
<dbReference type="UniPathway" id="UPA00109">
    <property type="reaction ID" value="UER00185"/>
</dbReference>
<dbReference type="Proteomes" id="UP000001173">
    <property type="component" value="Chromosome"/>
</dbReference>
<dbReference type="GO" id="GO:0005829">
    <property type="term" value="C:cytosol"/>
    <property type="evidence" value="ECO:0007669"/>
    <property type="project" value="TreeGrafter"/>
</dbReference>
<dbReference type="GO" id="GO:0043531">
    <property type="term" value="F:ADP binding"/>
    <property type="evidence" value="ECO:0007669"/>
    <property type="project" value="TreeGrafter"/>
</dbReference>
<dbReference type="GO" id="GO:0005524">
    <property type="term" value="F:ATP binding"/>
    <property type="evidence" value="ECO:0007669"/>
    <property type="project" value="UniProtKB-KW"/>
</dbReference>
<dbReference type="GO" id="GO:0004618">
    <property type="term" value="F:phosphoglycerate kinase activity"/>
    <property type="evidence" value="ECO:0007669"/>
    <property type="project" value="UniProtKB-UniRule"/>
</dbReference>
<dbReference type="GO" id="GO:0006094">
    <property type="term" value="P:gluconeogenesis"/>
    <property type="evidence" value="ECO:0007669"/>
    <property type="project" value="TreeGrafter"/>
</dbReference>
<dbReference type="GO" id="GO:0006096">
    <property type="term" value="P:glycolytic process"/>
    <property type="evidence" value="ECO:0007669"/>
    <property type="project" value="UniProtKB-UniRule"/>
</dbReference>
<dbReference type="CDD" id="cd00318">
    <property type="entry name" value="Phosphoglycerate_kinase"/>
    <property type="match status" value="1"/>
</dbReference>
<dbReference type="FunFam" id="3.40.50.1260:FF:000006">
    <property type="entry name" value="Phosphoglycerate kinase"/>
    <property type="match status" value="1"/>
</dbReference>
<dbReference type="FunFam" id="3.40.50.1260:FF:000031">
    <property type="entry name" value="Phosphoglycerate kinase 1"/>
    <property type="match status" value="1"/>
</dbReference>
<dbReference type="Gene3D" id="3.40.50.1260">
    <property type="entry name" value="Phosphoglycerate kinase, N-terminal domain"/>
    <property type="match status" value="2"/>
</dbReference>
<dbReference type="HAMAP" id="MF_00145">
    <property type="entry name" value="Phosphoglyc_kinase"/>
    <property type="match status" value="1"/>
</dbReference>
<dbReference type="InterPro" id="IPR001576">
    <property type="entry name" value="Phosphoglycerate_kinase"/>
</dbReference>
<dbReference type="InterPro" id="IPR015911">
    <property type="entry name" value="Phosphoglycerate_kinase_CS"/>
</dbReference>
<dbReference type="InterPro" id="IPR015824">
    <property type="entry name" value="Phosphoglycerate_kinase_N"/>
</dbReference>
<dbReference type="InterPro" id="IPR036043">
    <property type="entry name" value="Phosphoglycerate_kinase_sf"/>
</dbReference>
<dbReference type="PANTHER" id="PTHR11406">
    <property type="entry name" value="PHOSPHOGLYCERATE KINASE"/>
    <property type="match status" value="1"/>
</dbReference>
<dbReference type="PANTHER" id="PTHR11406:SF23">
    <property type="entry name" value="PHOSPHOGLYCERATE KINASE 1, CHLOROPLASTIC-RELATED"/>
    <property type="match status" value="1"/>
</dbReference>
<dbReference type="Pfam" id="PF00162">
    <property type="entry name" value="PGK"/>
    <property type="match status" value="1"/>
</dbReference>
<dbReference type="PIRSF" id="PIRSF000724">
    <property type="entry name" value="Pgk"/>
    <property type="match status" value="1"/>
</dbReference>
<dbReference type="PRINTS" id="PR00477">
    <property type="entry name" value="PHGLYCKINASE"/>
</dbReference>
<dbReference type="SUPFAM" id="SSF53748">
    <property type="entry name" value="Phosphoglycerate kinase"/>
    <property type="match status" value="1"/>
</dbReference>
<dbReference type="PROSITE" id="PS00111">
    <property type="entry name" value="PGLYCERATE_KINASE"/>
    <property type="match status" value="1"/>
</dbReference>
<organism>
    <name type="scientific">Zymomonas mobilis subsp. mobilis (strain ATCC 31821 / ZM4 / CP4)</name>
    <dbReference type="NCBI Taxonomy" id="264203"/>
    <lineage>
        <taxon>Bacteria</taxon>
        <taxon>Pseudomonadati</taxon>
        <taxon>Pseudomonadota</taxon>
        <taxon>Alphaproteobacteria</taxon>
        <taxon>Sphingomonadales</taxon>
        <taxon>Zymomonadaceae</taxon>
        <taxon>Zymomonas</taxon>
    </lineage>
</organism>
<gene>
    <name type="primary">pgk</name>
    <name type="ordered locus">ZMO0178</name>
</gene>
<protein>
    <recommendedName>
        <fullName>Phosphoglycerate kinase</fullName>
        <ecNumber>2.7.2.3</ecNumber>
    </recommendedName>
</protein>
<name>PGK_ZYMMO</name>
<keyword id="KW-0067">ATP-binding</keyword>
<keyword id="KW-0963">Cytoplasm</keyword>
<keyword id="KW-0324">Glycolysis</keyword>
<keyword id="KW-0418">Kinase</keyword>
<keyword id="KW-0547">Nucleotide-binding</keyword>
<keyword id="KW-1185">Reference proteome</keyword>
<keyword id="KW-0808">Transferase</keyword>
<evidence type="ECO:0000250" key="1"/>
<evidence type="ECO:0000305" key="2"/>
<comment type="catalytic activity">
    <reaction>
        <text>(2R)-3-phosphoglycerate + ATP = (2R)-3-phospho-glyceroyl phosphate + ADP</text>
        <dbReference type="Rhea" id="RHEA:14801"/>
        <dbReference type="ChEBI" id="CHEBI:30616"/>
        <dbReference type="ChEBI" id="CHEBI:57604"/>
        <dbReference type="ChEBI" id="CHEBI:58272"/>
        <dbReference type="ChEBI" id="CHEBI:456216"/>
        <dbReference type="EC" id="2.7.2.3"/>
    </reaction>
</comment>
<comment type="pathway">
    <text>Carbohydrate degradation; glycolysis; pyruvate from D-glyceraldehyde 3-phosphate: step 2/5.</text>
</comment>
<comment type="subunit">
    <text>Monomer.</text>
</comment>
<comment type="subcellular location">
    <subcellularLocation>
        <location>Cytoplasm</location>
    </subcellularLocation>
</comment>
<comment type="similarity">
    <text evidence="2">Belongs to the phosphoglycerate kinase family.</text>
</comment>
<proteinExistence type="inferred from homology"/>
<accession>P09404</accession>
<accession>Q5NR52</accession>
<sequence length="397" mass="41388">MAFRTLDDIGDVKGKRVLVREDLNVPMDGDRVTDDTRLRAAIPTVNELAEKGAKVLILAHFGRPKGQPNPEMSLARIKDALAGVLGRPVHFINDIKGEAAAKAVDALNPGAVALLENTRFYAGEEKNDPALAAEVAKLGDFYVNDAFSAAHRAHVSTEGLAHKLPAFAGRAMQKELEALEAALGKPTHPVAAVVGGAKVSTKLDVLTNLVSKVDHLIIGGGMANTFLAAQGVDVGKSLCEHELKDTVKGIFAAAEKTGCKIHLPSDVVVAKEFKANPPIRTIPVSDVAADEMILDVGPKAVAALTEVLKASKTLVWNGPLGAFEIEPFDKATVALAKEAAALTKAGSLISVAGGGDTVAALNHAGVAKDFSFVSTAGGAFLEWMEGKELPGVKALEA</sequence>
<reference key="1">
    <citation type="journal article" date="1988" name="J. Bacteriol.">
        <title>Phosphoglycerate kinase gene from Zymomonas mobilis: cloning, sequencing, and localization within the gap operon.</title>
        <authorList>
            <person name="Conway T."/>
            <person name="Ingram L.O."/>
        </authorList>
    </citation>
    <scope>NUCLEOTIDE SEQUENCE [GENOMIC DNA]</scope>
</reference>
<reference key="2">
    <citation type="journal article" date="2005" name="Nat. Biotechnol.">
        <title>The genome sequence of the ethanologenic bacterium Zymomonas mobilis ZM4.</title>
        <authorList>
            <person name="Seo J.-S."/>
            <person name="Chong H."/>
            <person name="Park H.S."/>
            <person name="Yoon K.-O."/>
            <person name="Jung C."/>
            <person name="Kim J.J."/>
            <person name="Hong J.H."/>
            <person name="Kim H."/>
            <person name="Kim J.-H."/>
            <person name="Kil J.-I."/>
            <person name="Park C.J."/>
            <person name="Oh H.-M."/>
            <person name="Lee J.-S."/>
            <person name="Jin S.-J."/>
            <person name="Um H.-W."/>
            <person name="Lee H.-J."/>
            <person name="Oh S.-J."/>
            <person name="Kim J.Y."/>
            <person name="Kang H.L."/>
            <person name="Lee S.Y."/>
            <person name="Lee K.J."/>
            <person name="Kang H.S."/>
        </authorList>
    </citation>
    <scope>NUCLEOTIDE SEQUENCE [LARGE SCALE GENOMIC DNA]</scope>
    <source>
        <strain>ATCC 31821 / ZM4 / CP4</strain>
    </source>
</reference>
<reference key="3">
    <citation type="journal article" date="1987" name="J. Bacteriol.">
        <title>Glyceraldehyde-3-phosphate dehydrogenase gene from Zymomonas mobilis: cloning, sequencing, and identification of promoter region.</title>
        <authorList>
            <person name="Conway T."/>
            <person name="Sewell G.W."/>
            <person name="Ingram L.O."/>
        </authorList>
    </citation>
    <scope>NUCLEOTIDE SEQUENCE [GENOMIC DNA] OF 1-30</scope>
</reference>